<dbReference type="EMBL" id="KX289879">
    <property type="protein sequence ID" value="APX52856.1"/>
    <property type="molecule type" value="mRNA"/>
</dbReference>
<dbReference type="ConoServer" id="9758">
    <property type="toxin name" value="Contryphan-Li1 precursor"/>
</dbReference>
<dbReference type="GO" id="GO:0005576">
    <property type="term" value="C:extracellular region"/>
    <property type="evidence" value="ECO:0007669"/>
    <property type="project" value="UniProtKB-SubCell"/>
</dbReference>
<dbReference type="GO" id="GO:0008200">
    <property type="term" value="F:ion channel inhibitor activity"/>
    <property type="evidence" value="ECO:0007669"/>
    <property type="project" value="InterPro"/>
</dbReference>
<dbReference type="GO" id="GO:0090729">
    <property type="term" value="F:toxin activity"/>
    <property type="evidence" value="ECO:0007669"/>
    <property type="project" value="UniProtKB-KW"/>
</dbReference>
<dbReference type="InterPro" id="IPR004214">
    <property type="entry name" value="Conotoxin"/>
</dbReference>
<dbReference type="InterPro" id="IPR011062">
    <property type="entry name" value="Contryphan_CS"/>
</dbReference>
<dbReference type="Pfam" id="PF02950">
    <property type="entry name" value="Conotoxin"/>
    <property type="match status" value="1"/>
</dbReference>
<dbReference type="PROSITE" id="PS60027">
    <property type="entry name" value="CONTRYPHAN"/>
    <property type="match status" value="1"/>
</dbReference>
<reference key="1">
    <citation type="journal article" date="2017" name="J. Proteome Res.">
        <title>Contryphan genes and mature peptides in the venom of nine cone snail species by transcriptomic and mass spectrometric analysis.</title>
        <authorList>
            <person name="Vijayasarathy M."/>
            <person name="Basheer S.M."/>
            <person name="Franklin J.B."/>
            <person name="Balaram P."/>
        </authorList>
    </citation>
    <scope>NUCLEOTIDE SEQUENCE [MRNA]</scope>
    <source>
        <tissue>Venom duct</tissue>
    </source>
</reference>
<evidence type="ECO:0000250" key="1">
    <source>
        <dbReference type="UniProtKB" id="P0C248"/>
    </source>
</evidence>
<evidence type="ECO:0000250" key="2">
    <source>
        <dbReference type="UniProtKB" id="P0C250"/>
    </source>
</evidence>
<evidence type="ECO:0000250" key="3">
    <source>
        <dbReference type="UniProtKB" id="P58786"/>
    </source>
</evidence>
<evidence type="ECO:0000250" key="4">
    <source>
        <dbReference type="UniProtKB" id="P58787"/>
    </source>
</evidence>
<evidence type="ECO:0000250" key="5">
    <source>
        <dbReference type="UniProtKB" id="P62903"/>
    </source>
</evidence>
<evidence type="ECO:0000250" key="6">
    <source>
        <dbReference type="UniProtKB" id="P83047"/>
    </source>
</evidence>
<evidence type="ECO:0000255" key="7"/>
<evidence type="ECO:0000305" key="8"/>
<evidence type="ECO:0000305" key="9">
    <source>
    </source>
</evidence>
<proteinExistence type="inferred from homology"/>
<keyword id="KW-0027">Amidation</keyword>
<keyword id="KW-0208">D-amino acid</keyword>
<keyword id="KW-1015">Disulfide bond</keyword>
<keyword id="KW-0379">Hydroxylation</keyword>
<keyword id="KW-0872">Ion channel impairing toxin</keyword>
<keyword id="KW-0528">Neurotoxin</keyword>
<keyword id="KW-0964">Secreted</keyword>
<keyword id="KW-0732">Signal</keyword>
<keyword id="KW-0800">Toxin</keyword>
<comment type="function">
    <text evidence="1 2 5 6">Its target is unknown, but this toxin may modulate voltage-activated calcium channels (Cav) or calcium-dependent potassium channels (KCa).</text>
</comment>
<comment type="subcellular location">
    <subcellularLocation>
        <location evidence="9">Secreted</location>
    </subcellularLocation>
</comment>
<comment type="tissue specificity">
    <text evidence="9">Expressed by the venom duct.</text>
</comment>
<comment type="domain">
    <text evidence="8">The cysteine framework is C-C.</text>
</comment>
<comment type="miscellaneous">
    <text evidence="4">Exists in two forms, due to cis-trans isomerization at 56-Cys-hydroxyPro-57. The cis conformation is the major form.</text>
</comment>
<comment type="similarity">
    <text evidence="8">Belongs to the O2 superfamily. Contryphan family.</text>
</comment>
<sequence>MEKLTMLVLVAAVLLSAQVMVQGDGDQPADRDAVPRDDNPGGTIGKIMNVLLPSGCPWNPWCG</sequence>
<feature type="signal peptide" evidence="7">
    <location>
        <begin position="1"/>
        <end position="23"/>
    </location>
</feature>
<feature type="propeptide" id="PRO_0000445131" evidence="8">
    <location>
        <begin position="24"/>
        <end position="54"/>
    </location>
</feature>
<feature type="peptide" id="PRO_5012704268" description="Contryphan-Li1" evidence="8">
    <location>
        <begin position="55"/>
        <end position="62"/>
    </location>
</feature>
<feature type="modified residue" description="4-hydroxyproline" evidence="3">
    <location>
        <position position="57"/>
    </location>
</feature>
<feature type="modified residue" description="D-tryptophan" evidence="3">
    <location>
        <position position="58"/>
    </location>
</feature>
<feature type="modified residue" description="Cysteine amide" evidence="3">
    <location>
        <position position="62"/>
    </location>
</feature>
<feature type="disulfide bond" evidence="3">
    <location>
        <begin position="56"/>
        <end position="62"/>
    </location>
</feature>
<organism>
    <name type="scientific">Conus lividus</name>
    <name type="common">Livid cone</name>
    <dbReference type="NCBI Taxonomy" id="89426"/>
    <lineage>
        <taxon>Eukaryota</taxon>
        <taxon>Metazoa</taxon>
        <taxon>Spiralia</taxon>
        <taxon>Lophotrochozoa</taxon>
        <taxon>Mollusca</taxon>
        <taxon>Gastropoda</taxon>
        <taxon>Caenogastropoda</taxon>
        <taxon>Neogastropoda</taxon>
        <taxon>Conoidea</taxon>
        <taxon>Conidae</taxon>
        <taxon>Conus</taxon>
        <taxon>Lividoconus</taxon>
    </lineage>
</organism>
<name>COW1_CONLI</name>
<protein>
    <recommendedName>
        <fullName evidence="8">Contryphan-Li1</fullName>
    </recommendedName>
</protein>
<accession>A0A1P8NVS2</accession>